<evidence type="ECO:0000255" key="1">
    <source>
        <dbReference type="HAMAP-Rule" id="MF_00001"/>
    </source>
</evidence>
<comment type="function">
    <text evidence="1">Catalyzes the condensation of carbamoyl phosphate and aspartate to form carbamoyl aspartate and inorganic phosphate, the committed step in the de novo pyrimidine nucleotide biosynthesis pathway.</text>
</comment>
<comment type="catalytic activity">
    <reaction evidence="1">
        <text>carbamoyl phosphate + L-aspartate = N-carbamoyl-L-aspartate + phosphate + H(+)</text>
        <dbReference type="Rhea" id="RHEA:20013"/>
        <dbReference type="ChEBI" id="CHEBI:15378"/>
        <dbReference type="ChEBI" id="CHEBI:29991"/>
        <dbReference type="ChEBI" id="CHEBI:32814"/>
        <dbReference type="ChEBI" id="CHEBI:43474"/>
        <dbReference type="ChEBI" id="CHEBI:58228"/>
        <dbReference type="EC" id="2.1.3.2"/>
    </reaction>
</comment>
<comment type="pathway">
    <text evidence="1">Pyrimidine metabolism; UMP biosynthesis via de novo pathway; (S)-dihydroorotate from bicarbonate: step 2/3.</text>
</comment>
<comment type="subunit">
    <text evidence="1">Heterododecamer (2C3:3R2) of six catalytic PyrB chains organized as two trimers (C3), and six regulatory PyrI chains organized as three dimers (R2).</text>
</comment>
<comment type="similarity">
    <text evidence="1">Belongs to the aspartate/ornithine carbamoyltransferase superfamily. ATCase family.</text>
</comment>
<feature type="chain" id="PRO_0000113121" description="Aspartate carbamoyltransferase catalytic subunit">
    <location>
        <begin position="1"/>
        <end position="313"/>
    </location>
</feature>
<feature type="binding site" evidence="1">
    <location>
        <position position="55"/>
    </location>
    <ligand>
        <name>carbamoyl phosphate</name>
        <dbReference type="ChEBI" id="CHEBI:58228"/>
    </ligand>
</feature>
<feature type="binding site" evidence="1">
    <location>
        <position position="56"/>
    </location>
    <ligand>
        <name>carbamoyl phosphate</name>
        <dbReference type="ChEBI" id="CHEBI:58228"/>
    </ligand>
</feature>
<feature type="binding site" evidence="1">
    <location>
        <position position="83"/>
    </location>
    <ligand>
        <name>L-aspartate</name>
        <dbReference type="ChEBI" id="CHEBI:29991"/>
    </ligand>
</feature>
<feature type="binding site" evidence="1">
    <location>
        <position position="105"/>
    </location>
    <ligand>
        <name>carbamoyl phosphate</name>
        <dbReference type="ChEBI" id="CHEBI:58228"/>
    </ligand>
</feature>
<feature type="binding site" evidence="1">
    <location>
        <position position="138"/>
    </location>
    <ligand>
        <name>carbamoyl phosphate</name>
        <dbReference type="ChEBI" id="CHEBI:58228"/>
    </ligand>
</feature>
<feature type="binding site" evidence="1">
    <location>
        <position position="141"/>
    </location>
    <ligand>
        <name>carbamoyl phosphate</name>
        <dbReference type="ChEBI" id="CHEBI:58228"/>
    </ligand>
</feature>
<feature type="binding site" evidence="1">
    <location>
        <position position="171"/>
    </location>
    <ligand>
        <name>L-aspartate</name>
        <dbReference type="ChEBI" id="CHEBI:29991"/>
    </ligand>
</feature>
<feature type="binding site" evidence="1">
    <location>
        <position position="225"/>
    </location>
    <ligand>
        <name>L-aspartate</name>
        <dbReference type="ChEBI" id="CHEBI:29991"/>
    </ligand>
</feature>
<feature type="binding site" evidence="1">
    <location>
        <position position="266"/>
    </location>
    <ligand>
        <name>carbamoyl phosphate</name>
        <dbReference type="ChEBI" id="CHEBI:58228"/>
    </ligand>
</feature>
<feature type="binding site" evidence="1">
    <location>
        <position position="267"/>
    </location>
    <ligand>
        <name>carbamoyl phosphate</name>
        <dbReference type="ChEBI" id="CHEBI:58228"/>
    </ligand>
</feature>
<keyword id="KW-0665">Pyrimidine biosynthesis</keyword>
<keyword id="KW-1185">Reference proteome</keyword>
<keyword id="KW-0808">Transferase</keyword>
<organism>
    <name type="scientific">Corynebacterium diphtheriae (strain ATCC 700971 / NCTC 13129 / Biotype gravis)</name>
    <dbReference type="NCBI Taxonomy" id="257309"/>
    <lineage>
        <taxon>Bacteria</taxon>
        <taxon>Bacillati</taxon>
        <taxon>Actinomycetota</taxon>
        <taxon>Actinomycetes</taxon>
        <taxon>Mycobacteriales</taxon>
        <taxon>Corynebacteriaceae</taxon>
        <taxon>Corynebacterium</taxon>
    </lineage>
</organism>
<gene>
    <name evidence="1" type="primary">pyrB</name>
    <name type="ordered locus">DIP1334</name>
</gene>
<reference key="1">
    <citation type="journal article" date="2003" name="Nucleic Acids Res.">
        <title>The complete genome sequence and analysis of Corynebacterium diphtheriae NCTC13129.</title>
        <authorList>
            <person name="Cerdeno-Tarraga A.-M."/>
            <person name="Efstratiou A."/>
            <person name="Dover L.G."/>
            <person name="Holden M.T.G."/>
            <person name="Pallen M.J."/>
            <person name="Bentley S.D."/>
            <person name="Besra G.S."/>
            <person name="Churcher C.M."/>
            <person name="James K.D."/>
            <person name="De Zoysa A."/>
            <person name="Chillingworth T."/>
            <person name="Cronin A."/>
            <person name="Dowd L."/>
            <person name="Feltwell T."/>
            <person name="Hamlin N."/>
            <person name="Holroyd S."/>
            <person name="Jagels K."/>
            <person name="Moule S."/>
            <person name="Quail M.A."/>
            <person name="Rabbinowitsch E."/>
            <person name="Rutherford K.M."/>
            <person name="Thomson N.R."/>
            <person name="Unwin L."/>
            <person name="Whitehead S."/>
            <person name="Barrell B.G."/>
            <person name="Parkhill J."/>
        </authorList>
    </citation>
    <scope>NUCLEOTIDE SEQUENCE [LARGE SCALE GENOMIC DNA]</scope>
    <source>
        <strain>ATCC 700971 / NCTC 13129 / Biotype gravis</strain>
    </source>
</reference>
<dbReference type="EC" id="2.1.3.2" evidence="1"/>
<dbReference type="EMBL" id="BX248357">
    <property type="protein sequence ID" value="CAE49862.1"/>
    <property type="molecule type" value="Genomic_DNA"/>
</dbReference>
<dbReference type="RefSeq" id="WP_003851649.1">
    <property type="nucleotide sequence ID" value="NC_002935.2"/>
</dbReference>
<dbReference type="SMR" id="Q6NH13"/>
<dbReference type="STRING" id="257309.DIP1334"/>
<dbReference type="KEGG" id="cdi:DIP1334"/>
<dbReference type="HOGENOM" id="CLU_043846_2_0_11"/>
<dbReference type="UniPathway" id="UPA00070">
    <property type="reaction ID" value="UER00116"/>
</dbReference>
<dbReference type="Proteomes" id="UP000002198">
    <property type="component" value="Chromosome"/>
</dbReference>
<dbReference type="GO" id="GO:0005829">
    <property type="term" value="C:cytosol"/>
    <property type="evidence" value="ECO:0007669"/>
    <property type="project" value="TreeGrafter"/>
</dbReference>
<dbReference type="GO" id="GO:0016597">
    <property type="term" value="F:amino acid binding"/>
    <property type="evidence" value="ECO:0007669"/>
    <property type="project" value="InterPro"/>
</dbReference>
<dbReference type="GO" id="GO:0004070">
    <property type="term" value="F:aspartate carbamoyltransferase activity"/>
    <property type="evidence" value="ECO:0007669"/>
    <property type="project" value="UniProtKB-UniRule"/>
</dbReference>
<dbReference type="GO" id="GO:0006207">
    <property type="term" value="P:'de novo' pyrimidine nucleobase biosynthetic process"/>
    <property type="evidence" value="ECO:0007669"/>
    <property type="project" value="InterPro"/>
</dbReference>
<dbReference type="GO" id="GO:0044205">
    <property type="term" value="P:'de novo' UMP biosynthetic process"/>
    <property type="evidence" value="ECO:0007669"/>
    <property type="project" value="UniProtKB-UniRule"/>
</dbReference>
<dbReference type="GO" id="GO:0006520">
    <property type="term" value="P:amino acid metabolic process"/>
    <property type="evidence" value="ECO:0007669"/>
    <property type="project" value="InterPro"/>
</dbReference>
<dbReference type="FunFam" id="3.40.50.1370:FF:000007">
    <property type="entry name" value="Aspartate carbamoyltransferase"/>
    <property type="match status" value="1"/>
</dbReference>
<dbReference type="Gene3D" id="3.40.50.1370">
    <property type="entry name" value="Aspartate/ornithine carbamoyltransferase"/>
    <property type="match status" value="2"/>
</dbReference>
<dbReference type="HAMAP" id="MF_00001">
    <property type="entry name" value="Asp_carb_tr"/>
    <property type="match status" value="1"/>
</dbReference>
<dbReference type="InterPro" id="IPR006132">
    <property type="entry name" value="Asp/Orn_carbamoyltranf_P-bd"/>
</dbReference>
<dbReference type="InterPro" id="IPR006130">
    <property type="entry name" value="Asp/Orn_carbamoylTrfase"/>
</dbReference>
<dbReference type="InterPro" id="IPR036901">
    <property type="entry name" value="Asp/Orn_carbamoylTrfase_sf"/>
</dbReference>
<dbReference type="InterPro" id="IPR002082">
    <property type="entry name" value="Asp_carbamoyltransf"/>
</dbReference>
<dbReference type="InterPro" id="IPR006131">
    <property type="entry name" value="Asp_carbamoyltransf_Asp/Orn-bd"/>
</dbReference>
<dbReference type="NCBIfam" id="TIGR00670">
    <property type="entry name" value="asp_carb_tr"/>
    <property type="match status" value="1"/>
</dbReference>
<dbReference type="NCBIfam" id="NF002032">
    <property type="entry name" value="PRK00856.1"/>
    <property type="match status" value="1"/>
</dbReference>
<dbReference type="PANTHER" id="PTHR45753:SF6">
    <property type="entry name" value="ASPARTATE CARBAMOYLTRANSFERASE"/>
    <property type="match status" value="1"/>
</dbReference>
<dbReference type="PANTHER" id="PTHR45753">
    <property type="entry name" value="ORNITHINE CARBAMOYLTRANSFERASE, MITOCHONDRIAL"/>
    <property type="match status" value="1"/>
</dbReference>
<dbReference type="Pfam" id="PF00185">
    <property type="entry name" value="OTCace"/>
    <property type="match status" value="1"/>
</dbReference>
<dbReference type="Pfam" id="PF02729">
    <property type="entry name" value="OTCace_N"/>
    <property type="match status" value="1"/>
</dbReference>
<dbReference type="PRINTS" id="PR00100">
    <property type="entry name" value="AOTCASE"/>
</dbReference>
<dbReference type="PRINTS" id="PR00101">
    <property type="entry name" value="ATCASE"/>
</dbReference>
<dbReference type="SUPFAM" id="SSF53671">
    <property type="entry name" value="Aspartate/ornithine carbamoyltransferase"/>
    <property type="match status" value="1"/>
</dbReference>
<dbReference type="PROSITE" id="PS00097">
    <property type="entry name" value="CARBAMOYLTRANSFERASE"/>
    <property type="match status" value="1"/>
</dbReference>
<sequence>MKHLLSIADLSKDDIIGLMDEADRFREALLGRDIKKLPTLRGRTIFTLFYENSTRTRSSFETAGKWMSADVINISAGSSSVKKGESLKDTGLTLSAIGADAIVMRHYSSGAAEQLARWVAPGGVGPSVINAGDGAHQHPTQALLDAVTIRQRLGDIDGRKVVIVGDCLHSRVVRSNVDLLTTLGAEVVLVGPPTLLPAGIDTWPVRYSYDMDAEIYDADVVMMLRVQQERMHGGFFPTHREYATLYGLSAERERKLQDHTIVMHPGPMLRGMEINFGVADAPRTAVLQQVSNGVHTRMAVLFTLIAGQDAAAF</sequence>
<protein>
    <recommendedName>
        <fullName evidence="1">Aspartate carbamoyltransferase catalytic subunit</fullName>
        <ecNumber evidence="1">2.1.3.2</ecNumber>
    </recommendedName>
    <alternativeName>
        <fullName evidence="1">Aspartate transcarbamylase</fullName>
        <shortName evidence="1">ATCase</shortName>
    </alternativeName>
</protein>
<name>PYRB_CORDI</name>
<proteinExistence type="inferred from homology"/>
<accession>Q6NH13</accession>